<keyword id="KW-0012">Acyltransferase</keyword>
<keyword id="KW-0963">Cytoplasm</keyword>
<keyword id="KW-0408">Iron</keyword>
<keyword id="KW-0479">Metal-binding</keyword>
<keyword id="KW-0808">Transferase</keyword>
<keyword id="KW-0819">tRNA processing</keyword>
<comment type="function">
    <text evidence="1">Required for the formation of a threonylcarbamoyl group on adenosine at position 37 (t(6)A37) in tRNAs that read codons beginning with adenine. Is involved in the transfer of the threonylcarbamoyl moiety of threonylcarbamoyl-AMP (TC-AMP) to the N6 group of A37, together with TsaE and TsaB. TsaD likely plays a direct catalytic role in this reaction.</text>
</comment>
<comment type="catalytic activity">
    <reaction evidence="1">
        <text>L-threonylcarbamoyladenylate + adenosine(37) in tRNA = N(6)-L-threonylcarbamoyladenosine(37) in tRNA + AMP + H(+)</text>
        <dbReference type="Rhea" id="RHEA:37059"/>
        <dbReference type="Rhea" id="RHEA-COMP:10162"/>
        <dbReference type="Rhea" id="RHEA-COMP:10163"/>
        <dbReference type="ChEBI" id="CHEBI:15378"/>
        <dbReference type="ChEBI" id="CHEBI:73682"/>
        <dbReference type="ChEBI" id="CHEBI:74411"/>
        <dbReference type="ChEBI" id="CHEBI:74418"/>
        <dbReference type="ChEBI" id="CHEBI:456215"/>
        <dbReference type="EC" id="2.3.1.234"/>
    </reaction>
</comment>
<comment type="cofactor">
    <cofactor evidence="1">
        <name>Fe(2+)</name>
        <dbReference type="ChEBI" id="CHEBI:29033"/>
    </cofactor>
    <text evidence="1">Binds 1 Fe(2+) ion per subunit.</text>
</comment>
<comment type="subcellular location">
    <subcellularLocation>
        <location evidence="1">Cytoplasm</location>
    </subcellularLocation>
</comment>
<comment type="similarity">
    <text evidence="1">Belongs to the KAE1 / TsaD family.</text>
</comment>
<accession>C4K3R9</accession>
<proteinExistence type="inferred from homology"/>
<reference key="1">
    <citation type="journal article" date="2009" name="Proc. Natl. Acad. Sci. U.S.A.">
        <title>Hamiltonella defensa, genome evolution of protective bacterial endosymbiont from pathogenic ancestors.</title>
        <authorList>
            <person name="Degnan P.H."/>
            <person name="Yu Y."/>
            <person name="Sisneros N."/>
            <person name="Wing R.A."/>
            <person name="Moran N.A."/>
        </authorList>
    </citation>
    <scope>NUCLEOTIDE SEQUENCE [LARGE SCALE GENOMIC DNA]</scope>
    <source>
        <strain>5AT</strain>
    </source>
</reference>
<sequence length="333" mass="35969">MRVLGIETSCDETGVAIYDSESGLLADQLYSQVKLHAQYGGVVPELASRDHIRKIVPLIQATLKEACVSPQEIDAVAYTAGPGLIGALLVGASVGRALAFAWNVPAVPVHHMEAHLLAPMLEDQVPDFPFIALLVSGGHTQLVQVNAIGKYALLGESLDDAVGEAFDKTAKLLGLEYPGGAMLAHLAQQGDPDRFIFPRPMIDRPGLDFSFSGLKTAAALTIRANHQDEQTRCDIAYAFEKAVIDTLAIKSERALEQTGLTRLVLAGGVSANEKLRSKLSVIMHERQGKVFYARPQFCTDNGAMIAYAGWRRIQEGSRSDLSISVHPKWALSQ</sequence>
<protein>
    <recommendedName>
        <fullName evidence="1">tRNA N6-adenosine threonylcarbamoyltransferase</fullName>
        <ecNumber evidence="1">2.3.1.234</ecNumber>
    </recommendedName>
    <alternativeName>
        <fullName evidence="1">N6-L-threonylcarbamoyladenine synthase</fullName>
        <shortName evidence="1">t(6)A synthase</shortName>
    </alternativeName>
    <alternativeName>
        <fullName evidence="1">t(6)A37 threonylcarbamoyladenosine biosynthesis protein TsaD</fullName>
    </alternativeName>
    <alternativeName>
        <fullName evidence="1">tRNA threonylcarbamoyladenosine biosynthesis protein TsaD</fullName>
    </alternativeName>
</protein>
<feature type="chain" id="PRO_1000215302" description="tRNA N6-adenosine threonylcarbamoyltransferase">
    <location>
        <begin position="1"/>
        <end position="333"/>
    </location>
</feature>
<feature type="binding site" evidence="1">
    <location>
        <position position="111"/>
    </location>
    <ligand>
        <name>Fe cation</name>
        <dbReference type="ChEBI" id="CHEBI:24875"/>
    </ligand>
</feature>
<feature type="binding site" evidence="1">
    <location>
        <position position="115"/>
    </location>
    <ligand>
        <name>Fe cation</name>
        <dbReference type="ChEBI" id="CHEBI:24875"/>
    </ligand>
</feature>
<feature type="binding site" evidence="1">
    <location>
        <begin position="134"/>
        <end position="138"/>
    </location>
    <ligand>
        <name>substrate</name>
    </ligand>
</feature>
<feature type="binding site" evidence="1">
    <location>
        <position position="167"/>
    </location>
    <ligand>
        <name>substrate</name>
    </ligand>
</feature>
<feature type="binding site" evidence="1">
    <location>
        <position position="180"/>
    </location>
    <ligand>
        <name>substrate</name>
    </ligand>
</feature>
<feature type="binding site" evidence="1">
    <location>
        <position position="272"/>
    </location>
    <ligand>
        <name>substrate</name>
    </ligand>
</feature>
<feature type="binding site" evidence="1">
    <location>
        <position position="300"/>
    </location>
    <ligand>
        <name>Fe cation</name>
        <dbReference type="ChEBI" id="CHEBI:24875"/>
    </ligand>
</feature>
<name>TSAD_HAMD5</name>
<gene>
    <name evidence="1" type="primary">tsaD</name>
    <name type="synonym">gcp</name>
    <name type="ordered locus">HDEF_0458</name>
</gene>
<dbReference type="EC" id="2.3.1.234" evidence="1"/>
<dbReference type="EMBL" id="CP001277">
    <property type="protein sequence ID" value="ACQ67212.1"/>
    <property type="molecule type" value="Genomic_DNA"/>
</dbReference>
<dbReference type="RefSeq" id="WP_012738169.1">
    <property type="nucleotide sequence ID" value="NC_012751.1"/>
</dbReference>
<dbReference type="SMR" id="C4K3R9"/>
<dbReference type="STRING" id="572265.HDEF_0458"/>
<dbReference type="GeneID" id="66260353"/>
<dbReference type="KEGG" id="hde:HDEF_0458"/>
<dbReference type="eggNOG" id="COG0533">
    <property type="taxonomic scope" value="Bacteria"/>
</dbReference>
<dbReference type="HOGENOM" id="CLU_023208_0_0_6"/>
<dbReference type="Proteomes" id="UP000002334">
    <property type="component" value="Chromosome"/>
</dbReference>
<dbReference type="GO" id="GO:0005737">
    <property type="term" value="C:cytoplasm"/>
    <property type="evidence" value="ECO:0007669"/>
    <property type="project" value="UniProtKB-SubCell"/>
</dbReference>
<dbReference type="GO" id="GO:0005506">
    <property type="term" value="F:iron ion binding"/>
    <property type="evidence" value="ECO:0007669"/>
    <property type="project" value="UniProtKB-UniRule"/>
</dbReference>
<dbReference type="GO" id="GO:0061711">
    <property type="term" value="F:N(6)-L-threonylcarbamoyladenine synthase activity"/>
    <property type="evidence" value="ECO:0007669"/>
    <property type="project" value="UniProtKB-EC"/>
</dbReference>
<dbReference type="GO" id="GO:0002949">
    <property type="term" value="P:tRNA threonylcarbamoyladenosine modification"/>
    <property type="evidence" value="ECO:0007669"/>
    <property type="project" value="UniProtKB-UniRule"/>
</dbReference>
<dbReference type="CDD" id="cd24133">
    <property type="entry name" value="ASKHA_NBD_TsaD_bac"/>
    <property type="match status" value="1"/>
</dbReference>
<dbReference type="FunFam" id="3.30.420.40:FF:000012">
    <property type="entry name" value="tRNA N6-adenosine threonylcarbamoyltransferase"/>
    <property type="match status" value="1"/>
</dbReference>
<dbReference type="FunFam" id="3.30.420.40:FF:000031">
    <property type="entry name" value="tRNA N6-adenosine threonylcarbamoyltransferase"/>
    <property type="match status" value="1"/>
</dbReference>
<dbReference type="Gene3D" id="3.30.420.40">
    <property type="match status" value="2"/>
</dbReference>
<dbReference type="HAMAP" id="MF_01445">
    <property type="entry name" value="TsaD"/>
    <property type="match status" value="1"/>
</dbReference>
<dbReference type="InterPro" id="IPR043129">
    <property type="entry name" value="ATPase_NBD"/>
</dbReference>
<dbReference type="InterPro" id="IPR000905">
    <property type="entry name" value="Gcp-like_dom"/>
</dbReference>
<dbReference type="InterPro" id="IPR017861">
    <property type="entry name" value="KAE1/TsaD"/>
</dbReference>
<dbReference type="InterPro" id="IPR017860">
    <property type="entry name" value="Peptidase_M22_CS"/>
</dbReference>
<dbReference type="InterPro" id="IPR022450">
    <property type="entry name" value="TsaD"/>
</dbReference>
<dbReference type="NCBIfam" id="TIGR00329">
    <property type="entry name" value="gcp_kae1"/>
    <property type="match status" value="1"/>
</dbReference>
<dbReference type="NCBIfam" id="TIGR03723">
    <property type="entry name" value="T6A_TsaD_YgjD"/>
    <property type="match status" value="1"/>
</dbReference>
<dbReference type="PANTHER" id="PTHR11735">
    <property type="entry name" value="TRNA N6-ADENOSINE THREONYLCARBAMOYLTRANSFERASE"/>
    <property type="match status" value="1"/>
</dbReference>
<dbReference type="PANTHER" id="PTHR11735:SF6">
    <property type="entry name" value="TRNA N6-ADENOSINE THREONYLCARBAMOYLTRANSFERASE, MITOCHONDRIAL"/>
    <property type="match status" value="1"/>
</dbReference>
<dbReference type="Pfam" id="PF00814">
    <property type="entry name" value="TsaD"/>
    <property type="match status" value="1"/>
</dbReference>
<dbReference type="PRINTS" id="PR00789">
    <property type="entry name" value="OSIALOPTASE"/>
</dbReference>
<dbReference type="SUPFAM" id="SSF53067">
    <property type="entry name" value="Actin-like ATPase domain"/>
    <property type="match status" value="2"/>
</dbReference>
<dbReference type="PROSITE" id="PS01016">
    <property type="entry name" value="GLYCOPROTEASE"/>
    <property type="match status" value="1"/>
</dbReference>
<organism>
    <name type="scientific">Hamiltonella defensa subsp. Acyrthosiphon pisum (strain 5AT)</name>
    <dbReference type="NCBI Taxonomy" id="572265"/>
    <lineage>
        <taxon>Bacteria</taxon>
        <taxon>Pseudomonadati</taxon>
        <taxon>Pseudomonadota</taxon>
        <taxon>Gammaproteobacteria</taxon>
        <taxon>Enterobacterales</taxon>
        <taxon>Enterobacteriaceae</taxon>
        <taxon>aphid secondary symbionts</taxon>
        <taxon>Candidatus Hamiltonella</taxon>
    </lineage>
</organism>
<evidence type="ECO:0000255" key="1">
    <source>
        <dbReference type="HAMAP-Rule" id="MF_01445"/>
    </source>
</evidence>